<comment type="function">
    <text evidence="1">Has a role in transcriptional regulation. Acts in parallel with the Ras/MAPK and the PI3K/PKB pathways in the control of cell identity and cellular growth. Essential for regulation of the cytoskeleton and cell growth but not for cell proliferation or growth rate. Required specifically for the microtubule-based basal transport of lipid droplets. Plays a partially redundant function downstream of Raf in cell fate specification in the developing eye. Pair-rule protein that regulates embryonic cellularization, gastrulation and segmentation (By similarity).</text>
</comment>
<comment type="subcellular location">
    <subcellularLocation>
        <location evidence="1">Nucleus</location>
    </subcellularLocation>
</comment>
<comment type="similarity">
    <text evidence="2">Belongs to the AF4 family.</text>
</comment>
<accession>B4NXA8</accession>
<evidence type="ECO:0000250" key="1">
    <source>
        <dbReference type="UniProtKB" id="Q9VQI9"/>
    </source>
</evidence>
<evidence type="ECO:0000255" key="2"/>
<evidence type="ECO:0000256" key="3">
    <source>
        <dbReference type="SAM" id="MobiDB-lite"/>
    </source>
</evidence>
<evidence type="ECO:0000312" key="4">
    <source>
        <dbReference type="EMBL" id="EDW87465.1"/>
    </source>
</evidence>
<organism>
    <name type="scientific">Drosophila yakuba</name>
    <name type="common">Fruit fly</name>
    <dbReference type="NCBI Taxonomy" id="7245"/>
    <lineage>
        <taxon>Eukaryota</taxon>
        <taxon>Metazoa</taxon>
        <taxon>Ecdysozoa</taxon>
        <taxon>Arthropoda</taxon>
        <taxon>Hexapoda</taxon>
        <taxon>Insecta</taxon>
        <taxon>Pterygota</taxon>
        <taxon>Neoptera</taxon>
        <taxon>Endopterygota</taxon>
        <taxon>Diptera</taxon>
        <taxon>Brachycera</taxon>
        <taxon>Muscomorpha</taxon>
        <taxon>Ephydroidea</taxon>
        <taxon>Drosophilidae</taxon>
        <taxon>Drosophila</taxon>
        <taxon>Sophophora</taxon>
    </lineage>
</organism>
<proteinExistence type="inferred from homology"/>
<reference evidence="4" key="1">
    <citation type="journal article" date="2007" name="Nature">
        <title>Evolution of genes and genomes on the Drosophila phylogeny.</title>
        <authorList>
            <consortium name="Drosophila 12 genomes consortium"/>
        </authorList>
    </citation>
    <scope>NUCLEOTIDE SEQUENCE [LARGE SCALE GENOMIC DNA]</scope>
    <source>
        <strain evidence="4">Tai18E2 / Tucson 14021-0261.01</strain>
    </source>
</reference>
<dbReference type="EMBL" id="CM000157">
    <property type="protein sequence ID" value="EDW87465.1"/>
    <property type="molecule type" value="Genomic_DNA"/>
</dbReference>
<dbReference type="SMR" id="B4NXA8"/>
<dbReference type="EnsemblMetazoa" id="FBtr0264710">
    <property type="protein sequence ID" value="FBpp0263202"/>
    <property type="gene ID" value="FBgn0235623"/>
</dbReference>
<dbReference type="EnsemblMetazoa" id="XM_002087717.4">
    <property type="protein sequence ID" value="XP_002087753.1"/>
    <property type="gene ID" value="LOC6526645"/>
</dbReference>
<dbReference type="GeneID" id="6526645"/>
<dbReference type="CTD" id="33496"/>
<dbReference type="eggNOG" id="ENOG502QR32">
    <property type="taxonomic scope" value="Eukaryota"/>
</dbReference>
<dbReference type="HOGENOM" id="CLU_241798_0_0_1"/>
<dbReference type="OMA" id="NMEATWT"/>
<dbReference type="OrthoDB" id="6382204at2759"/>
<dbReference type="PhylomeDB" id="B4NXA8"/>
<dbReference type="ChiTaRS" id="lilli">
    <property type="organism name" value="fly"/>
</dbReference>
<dbReference type="Proteomes" id="UP000002282">
    <property type="component" value="Chromosome 2L"/>
</dbReference>
<dbReference type="GO" id="GO:0000791">
    <property type="term" value="C:euchromatin"/>
    <property type="evidence" value="ECO:0007669"/>
    <property type="project" value="EnsemblMetazoa"/>
</dbReference>
<dbReference type="GO" id="GO:0005634">
    <property type="term" value="C:nucleus"/>
    <property type="evidence" value="ECO:0000250"/>
    <property type="project" value="UniProtKB"/>
</dbReference>
<dbReference type="GO" id="GO:0032783">
    <property type="term" value="C:super elongation complex"/>
    <property type="evidence" value="ECO:0007669"/>
    <property type="project" value="EnsemblMetazoa"/>
</dbReference>
<dbReference type="GO" id="GO:0003677">
    <property type="term" value="F:DNA binding"/>
    <property type="evidence" value="ECO:0007669"/>
    <property type="project" value="UniProtKB-KW"/>
</dbReference>
<dbReference type="GO" id="GO:0061629">
    <property type="term" value="F:RNA polymerase II-specific DNA-binding transcription factor binding"/>
    <property type="evidence" value="ECO:0007669"/>
    <property type="project" value="EnsemblMetazoa"/>
</dbReference>
<dbReference type="GO" id="GO:0003712">
    <property type="term" value="F:transcription coregulator activity"/>
    <property type="evidence" value="ECO:0000250"/>
    <property type="project" value="UniProtKB"/>
</dbReference>
<dbReference type="GO" id="GO:0007611">
    <property type="term" value="P:learning or memory"/>
    <property type="evidence" value="ECO:0007669"/>
    <property type="project" value="EnsemblMetazoa"/>
</dbReference>
<dbReference type="GO" id="GO:0097150">
    <property type="term" value="P:neuronal stem cell population maintenance"/>
    <property type="evidence" value="ECO:0007669"/>
    <property type="project" value="EnsemblMetazoa"/>
</dbReference>
<dbReference type="GO" id="GO:0007366">
    <property type="term" value="P:periodic partitioning by pair rule gene"/>
    <property type="evidence" value="ECO:0000250"/>
    <property type="project" value="UniProtKB"/>
</dbReference>
<dbReference type="GO" id="GO:0045944">
    <property type="term" value="P:positive regulation of transcription by RNA polymerase II"/>
    <property type="evidence" value="ECO:0007669"/>
    <property type="project" value="EnsemblMetazoa"/>
</dbReference>
<dbReference type="GO" id="GO:0051493">
    <property type="term" value="P:regulation of cytoskeleton organization"/>
    <property type="evidence" value="ECO:0000250"/>
    <property type="project" value="UniProtKB"/>
</dbReference>
<dbReference type="GO" id="GO:0006355">
    <property type="term" value="P:regulation of DNA-templated transcription"/>
    <property type="evidence" value="ECO:0000250"/>
    <property type="project" value="UniProtKB"/>
</dbReference>
<dbReference type="GO" id="GO:0032368">
    <property type="term" value="P:regulation of lipid transport"/>
    <property type="evidence" value="ECO:0000250"/>
    <property type="project" value="UniProtKB"/>
</dbReference>
<dbReference type="GO" id="GO:0048190">
    <property type="term" value="P:wing disc dorsal/ventral pattern formation"/>
    <property type="evidence" value="ECO:0007669"/>
    <property type="project" value="EnsemblMetazoa"/>
</dbReference>
<dbReference type="InterPro" id="IPR007797">
    <property type="entry name" value="AF4/FMR2"/>
</dbReference>
<dbReference type="InterPro" id="IPR043640">
    <property type="entry name" value="AF4/FMR2_CHD"/>
</dbReference>
<dbReference type="PANTHER" id="PTHR10528">
    <property type="entry name" value="AF4/FMR2 FAMILY MEMBER"/>
    <property type="match status" value="1"/>
</dbReference>
<dbReference type="PANTHER" id="PTHR10528:SF17">
    <property type="entry name" value="AF4_FMR2 FAMILY MEMBER LILLI"/>
    <property type="match status" value="1"/>
</dbReference>
<dbReference type="Pfam" id="PF18876">
    <property type="entry name" value="AFF4_CHD"/>
    <property type="match status" value="1"/>
</dbReference>
<dbReference type="PROSITE" id="PS00354">
    <property type="entry name" value="HMGI_Y"/>
    <property type="match status" value="1"/>
</dbReference>
<feature type="chain" id="PRO_0000394680" description="AF4/FMR2 family member lilli">
    <location>
        <begin position="1"/>
        <end position="1671"/>
    </location>
</feature>
<feature type="DNA-binding region" description="A.T hook" evidence="2">
    <location>
        <begin position="849"/>
        <end position="861"/>
    </location>
</feature>
<feature type="region of interest" description="Disordered" evidence="3">
    <location>
        <begin position="53"/>
        <end position="79"/>
    </location>
</feature>
<feature type="region of interest" description="Disordered" evidence="3">
    <location>
        <begin position="126"/>
        <end position="304"/>
    </location>
</feature>
<feature type="region of interest" description="Disordered" evidence="3">
    <location>
        <begin position="393"/>
        <end position="599"/>
    </location>
</feature>
<feature type="region of interest" description="Disordered" evidence="3">
    <location>
        <begin position="723"/>
        <end position="761"/>
    </location>
</feature>
<feature type="region of interest" description="Disordered" evidence="3">
    <location>
        <begin position="774"/>
        <end position="1162"/>
    </location>
</feature>
<feature type="region of interest" description="Disordered" evidence="3">
    <location>
        <begin position="1185"/>
        <end position="1311"/>
    </location>
</feature>
<feature type="region of interest" description="Disordered" evidence="3">
    <location>
        <begin position="1562"/>
        <end position="1586"/>
    </location>
</feature>
<feature type="compositionally biased region" description="Basic and acidic residues" evidence="3">
    <location>
        <begin position="70"/>
        <end position="79"/>
    </location>
</feature>
<feature type="compositionally biased region" description="Low complexity" evidence="3">
    <location>
        <begin position="145"/>
        <end position="179"/>
    </location>
</feature>
<feature type="compositionally biased region" description="Low complexity" evidence="3">
    <location>
        <begin position="210"/>
        <end position="242"/>
    </location>
</feature>
<feature type="compositionally biased region" description="Basic and acidic residues" evidence="3">
    <location>
        <begin position="424"/>
        <end position="437"/>
    </location>
</feature>
<feature type="compositionally biased region" description="Acidic residues" evidence="3">
    <location>
        <begin position="439"/>
        <end position="450"/>
    </location>
</feature>
<feature type="compositionally biased region" description="Low complexity" evidence="3">
    <location>
        <begin position="459"/>
        <end position="479"/>
    </location>
</feature>
<feature type="compositionally biased region" description="Basic residues" evidence="3">
    <location>
        <begin position="487"/>
        <end position="496"/>
    </location>
</feature>
<feature type="compositionally biased region" description="Low complexity" evidence="3">
    <location>
        <begin position="497"/>
        <end position="522"/>
    </location>
</feature>
<feature type="compositionally biased region" description="Low complexity" evidence="3">
    <location>
        <begin position="561"/>
        <end position="587"/>
    </location>
</feature>
<feature type="compositionally biased region" description="Polar residues" evidence="3">
    <location>
        <begin position="588"/>
        <end position="599"/>
    </location>
</feature>
<feature type="compositionally biased region" description="Low complexity" evidence="3">
    <location>
        <begin position="723"/>
        <end position="755"/>
    </location>
</feature>
<feature type="compositionally biased region" description="Polar residues" evidence="3">
    <location>
        <begin position="774"/>
        <end position="786"/>
    </location>
</feature>
<feature type="compositionally biased region" description="Basic residues" evidence="3">
    <location>
        <begin position="800"/>
        <end position="810"/>
    </location>
</feature>
<feature type="compositionally biased region" description="Low complexity" evidence="3">
    <location>
        <begin position="858"/>
        <end position="896"/>
    </location>
</feature>
<feature type="compositionally biased region" description="Polar residues" evidence="3">
    <location>
        <begin position="907"/>
        <end position="917"/>
    </location>
</feature>
<feature type="compositionally biased region" description="Low complexity" evidence="3">
    <location>
        <begin position="947"/>
        <end position="963"/>
    </location>
</feature>
<feature type="compositionally biased region" description="Low complexity" evidence="3">
    <location>
        <begin position="988"/>
        <end position="1002"/>
    </location>
</feature>
<feature type="compositionally biased region" description="Polar residues" evidence="3">
    <location>
        <begin position="1009"/>
        <end position="1020"/>
    </location>
</feature>
<feature type="compositionally biased region" description="Low complexity" evidence="3">
    <location>
        <begin position="1032"/>
        <end position="1058"/>
    </location>
</feature>
<feature type="compositionally biased region" description="Basic and acidic residues" evidence="3">
    <location>
        <begin position="1063"/>
        <end position="1080"/>
    </location>
</feature>
<feature type="compositionally biased region" description="Pro residues" evidence="3">
    <location>
        <begin position="1120"/>
        <end position="1130"/>
    </location>
</feature>
<feature type="compositionally biased region" description="Polar residues" evidence="3">
    <location>
        <begin position="1188"/>
        <end position="1203"/>
    </location>
</feature>
<feature type="compositionally biased region" description="Basic and acidic residues" evidence="3">
    <location>
        <begin position="1224"/>
        <end position="1241"/>
    </location>
</feature>
<feature type="compositionally biased region" description="Basic and acidic residues" evidence="3">
    <location>
        <begin position="1250"/>
        <end position="1280"/>
    </location>
</feature>
<feature type="compositionally biased region" description="Low complexity" evidence="3">
    <location>
        <begin position="1562"/>
        <end position="1581"/>
    </location>
</feature>
<feature type="modified residue" description="Phosphothreonine" evidence="1">
    <location>
        <position position="416"/>
    </location>
</feature>
<feature type="modified residue" description="Phosphoserine" evidence="1">
    <location>
        <position position="446"/>
    </location>
</feature>
<feature type="modified residue" description="Phosphoserine" evidence="1">
    <location>
        <position position="448"/>
    </location>
</feature>
<feature type="modified residue" description="Phosphoserine" evidence="1">
    <location>
        <position position="819"/>
    </location>
</feature>
<feature type="modified residue" description="Phosphoserine" evidence="1">
    <location>
        <position position="820"/>
    </location>
</feature>
<feature type="modified residue" description="Phosphoserine" evidence="1">
    <location>
        <position position="869"/>
    </location>
</feature>
<feature type="modified residue" description="Phosphoserine" evidence="1">
    <location>
        <position position="871"/>
    </location>
</feature>
<feature type="modified residue" description="Phosphoserine" evidence="1">
    <location>
        <position position="1360"/>
    </location>
</feature>
<feature type="modified residue" description="Phosphothreonine" evidence="1">
    <location>
        <position position="1362"/>
    </location>
</feature>
<name>AFFL_DROYA</name>
<sequence>MAQQQQQQLQQQQQHHTSSINNNNSILLLHQQQPQQQQQQQLDQLQQYNNNLYSQNYNMEEYERRKRREREKIERQQGIQIDDRETSLFGEPRRLTEGDAEITAALGEFFEARVYINNQTVGISRSAPGAGNPRLQPNLPPQAKSLGHSPSSASSAAGPTSASATTALPGQQQHYQQQQRPPTYVKQADNKPPYNGRGGYPGQPMKNDIPSSSGMAPPRGPPRSSSSNSNSSSATNNASSGGVPANTPLGPPLSTQMPNGREKSFLGPPAPALHNGTGGGRFVPPAASKRPGVGQQPPPPEKDVNKIISDIANIFSVQPLTSIAATPHAPTRENYNLLAPNKQKYAMDIPSSPPSAEPSSLMTPLFTPIAPLVTTPPQASQLPLGAATSGTILAGEPLAPLHQLPPTPPKAASGVTSPGPTKPLKTEKNHSLEKQDSCLENDLELSESEDEQRKKEGRSAGNSSNSSESDSSESGSESSSKNDLQHHPNHQQHHHQLQQQQQASMQQQQVLQQQQQHRPQPLTSNGAQNKKFRHEIIARGSNTITGLLSSSGFGSGGSVGPAGVNSSAVMGAGSVSGGTLSSGGSSSNKTPSPTESNKWNLSRFFHKPANQTNSESVSPGNVSMKVPGILPGGAQIIPESIDVTTAIVKNEKIHDDHMAMEEGEEEDDDEEQQMRYGGGLSVTPVAVKKEAIDAVSEMALGAIPKTQIKRESAEALLSARLSDSGTSASGSSSSSSSSSDSAVGGEVVPMPGPGETFQLPGVPADITTVVRVPPTQSQKAPPSNSVTLTPILPLPTSPKQRQKKPRKKKAVTSAPILDSSDDDEPPPKHPGLDHSAVSVQAQPATDTVKKGRGRPRKQQQSGGSGNLSSASAGSSSQTKGPTLTAAKKPLAKTPLAMSRARKREHSSQSSSNGNTPTKKVATPVLVAAPLKPTSVTAGSSSSDEDSSSSAESSSKSSSSSSSSDDTETQNTNCRIVKLNKTGAVQKKALLGSGSSSASSSGSEPEDQTSRSQVGSGQALAQQLPPYKQLPISQHSQHLSSSECSSSSGGCTAVCSSSSGEEDEGRREKERERKPKSDKNKISTLTRIFNPKEGGAKKQGQVVIVDLQEEQQQGKLDAAAQPPPPHAPPAAPAAIMAKPRMTPTQQQQLGAGLASPARTTTPHLTSLICKIDLSKLSRERIMRLKKLTPAQQNGHLTPKDQATNAVHVPNGYAGDTNPAAKVKHEHPVKPEPELDAGYEAKFKPGNVKQEFQLKQERDRDRERERERERERERDREREQPPGRRRKRSSSSSSSPYKEKKRKKEKADQLQIGKELLPVPVLLPSNNHERMPNHDRLSYDKLQLLHEDAAAVIGDVSAANGSPTKKLLVMSPLPPPPTVTVAPATCNEAVQTTPPSATTTTATAPPVPATRLIYRSYFDRDVEHPSDDLRKNNQFLQEAINRKHAADLERDSFNQVTLYLEAVVYFLLTADAMERCSSEQATNTMYKDTLSLIKFISTKFRPYQQQSTTNIQHETHNKVAILSLRCQSLISLKLYKLRRKDCRAIINGLTDFFRVGRGDIANGNTPSSISPSNSVGSQGSGSNTPPGRIVSPDIHNMLCKQNEFLSYLNSAHELWDQADRLVRTGNHIDFIRELDHENGPLTLHSTMHEVFRYVQAGLKTLRDAVSHPTHQSQ</sequence>
<gene>
    <name evidence="1" type="primary">lilli</name>
    <name type="ORF">GE18192</name>
</gene>
<keyword id="KW-0217">Developmental protein</keyword>
<keyword id="KW-0238">DNA-binding</keyword>
<keyword id="KW-0539">Nucleus</keyword>
<keyword id="KW-0562">Pair-rule protein</keyword>
<keyword id="KW-0597">Phosphoprotein</keyword>
<keyword id="KW-0804">Transcription</keyword>
<keyword id="KW-0805">Transcription regulation</keyword>
<protein>
    <recommendedName>
        <fullName evidence="1">AF4/FMR2 family member lilli</fullName>
    </recommendedName>
    <alternativeName>
        <fullName evidence="1">Protein lilliputian</fullName>
    </alternativeName>
</protein>